<protein>
    <recommendedName>
        <fullName>Peptidyl-prolyl cis-trans isomerase FKBP17-1, chloroplastic</fullName>
        <shortName>PPIase FKBP17-1</shortName>
        <ecNumber>5.2.1.8</ecNumber>
    </recommendedName>
    <alternativeName>
        <fullName>FK506-binding protein 17-1</fullName>
        <shortName>AtFKBP17-1</shortName>
    </alternativeName>
    <alternativeName>
        <fullName>Immunophilin FKBP17-1</fullName>
    </alternativeName>
    <alternativeName>
        <fullName>Rotamase</fullName>
    </alternativeName>
</protein>
<evidence type="ECO:0000250" key="1"/>
<evidence type="ECO:0000255" key="2"/>
<evidence type="ECO:0000255" key="3">
    <source>
        <dbReference type="PROSITE-ProRule" id="PRU00277"/>
    </source>
</evidence>
<evidence type="ECO:0000305" key="4"/>
<gene>
    <name type="primary">FKBP17-1</name>
    <name type="synonym">FKBP24-1</name>
    <name type="synonym">FKBP25I</name>
    <name type="ordered locus">At4g19830</name>
    <name type="ORF">T16H5.190</name>
</gene>
<name>FK171_ARATH</name>
<accession>O81864</accession>
<accession>Q8GY75</accession>
<organism>
    <name type="scientific">Arabidopsis thaliana</name>
    <name type="common">Mouse-ear cress</name>
    <dbReference type="NCBI Taxonomy" id="3702"/>
    <lineage>
        <taxon>Eukaryota</taxon>
        <taxon>Viridiplantae</taxon>
        <taxon>Streptophyta</taxon>
        <taxon>Embryophyta</taxon>
        <taxon>Tracheophyta</taxon>
        <taxon>Spermatophyta</taxon>
        <taxon>Magnoliopsida</taxon>
        <taxon>eudicotyledons</taxon>
        <taxon>Gunneridae</taxon>
        <taxon>Pentapetalae</taxon>
        <taxon>rosids</taxon>
        <taxon>malvids</taxon>
        <taxon>Brassicales</taxon>
        <taxon>Brassicaceae</taxon>
        <taxon>Camelineae</taxon>
        <taxon>Arabidopsis</taxon>
    </lineage>
</organism>
<dbReference type="EC" id="5.2.1.8"/>
<dbReference type="EMBL" id="AJ242482">
    <property type="protein sequence ID" value="CAB64722.1"/>
    <property type="molecule type" value="mRNA"/>
</dbReference>
<dbReference type="EMBL" id="AL024486">
    <property type="protein sequence ID" value="CAA19700.1"/>
    <property type="molecule type" value="Genomic_DNA"/>
</dbReference>
<dbReference type="EMBL" id="AL161551">
    <property type="protein sequence ID" value="CAB78985.1"/>
    <property type="molecule type" value="Genomic_DNA"/>
</dbReference>
<dbReference type="EMBL" id="CP002687">
    <property type="protein sequence ID" value="AEE84231.1"/>
    <property type="molecule type" value="Genomic_DNA"/>
</dbReference>
<dbReference type="EMBL" id="BT024613">
    <property type="protein sequence ID" value="ABD43011.1"/>
    <property type="molecule type" value="mRNA"/>
</dbReference>
<dbReference type="EMBL" id="AK117814">
    <property type="protein sequence ID" value="BAC42456.1"/>
    <property type="status" value="ALT_INIT"/>
    <property type="molecule type" value="mRNA"/>
</dbReference>
<dbReference type="PIR" id="T04764">
    <property type="entry name" value="T04764"/>
</dbReference>
<dbReference type="RefSeq" id="NP_193718.1">
    <property type="nucleotide sequence ID" value="NM_118103.4"/>
</dbReference>
<dbReference type="SMR" id="O81864"/>
<dbReference type="FunCoup" id="O81864">
    <property type="interactions" value="492"/>
</dbReference>
<dbReference type="STRING" id="3702.O81864"/>
<dbReference type="PaxDb" id="3702-AT4G19830.1"/>
<dbReference type="ProteomicsDB" id="230105"/>
<dbReference type="EnsemblPlants" id="AT4G19830.1">
    <property type="protein sequence ID" value="AT4G19830.1"/>
    <property type="gene ID" value="AT4G19830"/>
</dbReference>
<dbReference type="GeneID" id="827727"/>
<dbReference type="Gramene" id="AT4G19830.1">
    <property type="protein sequence ID" value="AT4G19830.1"/>
    <property type="gene ID" value="AT4G19830"/>
</dbReference>
<dbReference type="KEGG" id="ath:AT4G19830"/>
<dbReference type="Araport" id="AT4G19830"/>
<dbReference type="TAIR" id="AT4G19830"/>
<dbReference type="eggNOG" id="KOG0552">
    <property type="taxonomic scope" value="Eukaryota"/>
</dbReference>
<dbReference type="HOGENOM" id="CLU_089785_3_0_1"/>
<dbReference type="InParanoid" id="O81864"/>
<dbReference type="OMA" id="YDHKDSN"/>
<dbReference type="PhylomeDB" id="O81864"/>
<dbReference type="PRO" id="PR:O81864"/>
<dbReference type="Proteomes" id="UP000006548">
    <property type="component" value="Chromosome 4"/>
</dbReference>
<dbReference type="ExpressionAtlas" id="O81864">
    <property type="expression patterns" value="baseline and differential"/>
</dbReference>
<dbReference type="GO" id="GO:0009543">
    <property type="term" value="C:chloroplast thylakoid lumen"/>
    <property type="evidence" value="ECO:0000314"/>
    <property type="project" value="TAIR"/>
</dbReference>
<dbReference type="GO" id="GO:0003755">
    <property type="term" value="F:peptidyl-prolyl cis-trans isomerase activity"/>
    <property type="evidence" value="ECO:0007669"/>
    <property type="project" value="UniProtKB-KW"/>
</dbReference>
<dbReference type="Gene3D" id="3.10.50.40">
    <property type="match status" value="1"/>
</dbReference>
<dbReference type="InterPro" id="IPR044197">
    <property type="entry name" value="FKBP17-1-like"/>
</dbReference>
<dbReference type="InterPro" id="IPR046357">
    <property type="entry name" value="PPIase_dom_sf"/>
</dbReference>
<dbReference type="InterPro" id="IPR001179">
    <property type="entry name" value="PPIase_FKBP_dom"/>
</dbReference>
<dbReference type="PANTHER" id="PTHR47860">
    <property type="entry name" value="PEPTIDYL-PROLYL CIS-TRANS ISOMERASE FKBP17-1, CHLOROPLASTIC"/>
    <property type="match status" value="1"/>
</dbReference>
<dbReference type="PANTHER" id="PTHR47860:SF1">
    <property type="entry name" value="PEPTIDYL-PROLYL CIS-TRANS ISOMERASE FKBP17-1, CHLOROPLASTIC"/>
    <property type="match status" value="1"/>
</dbReference>
<dbReference type="Pfam" id="PF00254">
    <property type="entry name" value="FKBP_C"/>
    <property type="match status" value="1"/>
</dbReference>
<dbReference type="SUPFAM" id="SSF54534">
    <property type="entry name" value="FKBP-like"/>
    <property type="match status" value="1"/>
</dbReference>
<dbReference type="PROSITE" id="PS50059">
    <property type="entry name" value="FKBP_PPIASE"/>
    <property type="match status" value="1"/>
</dbReference>
<proteinExistence type="evidence at transcript level"/>
<feature type="transit peptide" description="Chloroplast" evidence="2">
    <location>
        <begin position="1"/>
        <end position="63"/>
    </location>
</feature>
<feature type="transit peptide" description="Thylakoid">
    <location>
        <begin position="64"/>
        <end status="unknown"/>
    </location>
</feature>
<feature type="chain" id="PRO_0000416132" description="Peptidyl-prolyl cis-trans isomerase FKBP17-1, chloroplastic">
    <location>
        <begin status="unknown"/>
        <end position="229"/>
    </location>
</feature>
<feature type="domain" description="PPIase FKBP-type" evidence="3">
    <location>
        <begin position="105"/>
        <end position="225"/>
    </location>
</feature>
<keyword id="KW-0150">Chloroplast</keyword>
<keyword id="KW-0413">Isomerase</keyword>
<keyword id="KW-0934">Plastid</keyword>
<keyword id="KW-1185">Reference proteome</keyword>
<keyword id="KW-0697">Rotamase</keyword>
<keyword id="KW-0793">Thylakoid</keyword>
<keyword id="KW-0809">Transit peptide</keyword>
<comment type="function">
    <text evidence="1">PPIases accelerate the folding of proteins. It catalyzes the cis-trans isomerization of proline imidic peptide bonds in oligopeptides (By similarity).</text>
</comment>
<comment type="catalytic activity">
    <reaction>
        <text>[protein]-peptidylproline (omega=180) = [protein]-peptidylproline (omega=0)</text>
        <dbReference type="Rhea" id="RHEA:16237"/>
        <dbReference type="Rhea" id="RHEA-COMP:10747"/>
        <dbReference type="Rhea" id="RHEA-COMP:10748"/>
        <dbReference type="ChEBI" id="CHEBI:83833"/>
        <dbReference type="ChEBI" id="CHEBI:83834"/>
        <dbReference type="EC" id="5.2.1.8"/>
    </reaction>
</comment>
<comment type="subcellular location">
    <subcellularLocation>
        <location evidence="1">Plastid</location>
        <location evidence="1">Chloroplast thylakoid lumen</location>
    </subcellularLocation>
</comment>
<comment type="similarity">
    <text evidence="4">Belongs to the FKBP-type PPIase family.</text>
</comment>
<comment type="sequence caution" evidence="4">
    <conflict type="erroneous initiation">
        <sequence resource="EMBL-CDS" id="BAC42456"/>
    </conflict>
    <text>Truncated N-terminus.</text>
</comment>
<reference key="1">
    <citation type="submission" date="1999-05" db="EMBL/GenBank/DDBJ databases">
        <title>Structure and evolution of FKBP-like genes in Arabidopsis.</title>
        <authorList>
            <person name="Kolukisaoglu U."/>
            <person name="Billion K."/>
            <person name="Eckhoff A."/>
            <person name="Moeller A."/>
            <person name="Saal B."/>
            <person name="Wanke D."/>
            <person name="Schulz B."/>
        </authorList>
    </citation>
    <scope>NUCLEOTIDE SEQUENCE [MRNA]</scope>
</reference>
<reference key="2">
    <citation type="journal article" date="1999" name="Nature">
        <title>Sequence and analysis of chromosome 4 of the plant Arabidopsis thaliana.</title>
        <authorList>
            <person name="Mayer K.F.X."/>
            <person name="Schueller C."/>
            <person name="Wambutt R."/>
            <person name="Murphy G."/>
            <person name="Volckaert G."/>
            <person name="Pohl T."/>
            <person name="Duesterhoeft A."/>
            <person name="Stiekema W."/>
            <person name="Entian K.-D."/>
            <person name="Terryn N."/>
            <person name="Harris B."/>
            <person name="Ansorge W."/>
            <person name="Brandt P."/>
            <person name="Grivell L.A."/>
            <person name="Rieger M."/>
            <person name="Weichselgartner M."/>
            <person name="de Simone V."/>
            <person name="Obermaier B."/>
            <person name="Mache R."/>
            <person name="Mueller M."/>
            <person name="Kreis M."/>
            <person name="Delseny M."/>
            <person name="Puigdomenech P."/>
            <person name="Watson M."/>
            <person name="Schmidtheini T."/>
            <person name="Reichert B."/>
            <person name="Portetelle D."/>
            <person name="Perez-Alonso M."/>
            <person name="Boutry M."/>
            <person name="Bancroft I."/>
            <person name="Vos P."/>
            <person name="Hoheisel J."/>
            <person name="Zimmermann W."/>
            <person name="Wedler H."/>
            <person name="Ridley P."/>
            <person name="Langham S.-A."/>
            <person name="McCullagh B."/>
            <person name="Bilham L."/>
            <person name="Robben J."/>
            <person name="van der Schueren J."/>
            <person name="Grymonprez B."/>
            <person name="Chuang Y.-J."/>
            <person name="Vandenbussche F."/>
            <person name="Braeken M."/>
            <person name="Weltjens I."/>
            <person name="Voet M."/>
            <person name="Bastiaens I."/>
            <person name="Aert R."/>
            <person name="Defoor E."/>
            <person name="Weitzenegger T."/>
            <person name="Bothe G."/>
            <person name="Ramsperger U."/>
            <person name="Hilbert H."/>
            <person name="Braun M."/>
            <person name="Holzer E."/>
            <person name="Brandt A."/>
            <person name="Peters S."/>
            <person name="van Staveren M."/>
            <person name="Dirkse W."/>
            <person name="Mooijman P."/>
            <person name="Klein Lankhorst R."/>
            <person name="Rose M."/>
            <person name="Hauf J."/>
            <person name="Koetter P."/>
            <person name="Berneiser S."/>
            <person name="Hempel S."/>
            <person name="Feldpausch M."/>
            <person name="Lamberth S."/>
            <person name="Van den Daele H."/>
            <person name="De Keyser A."/>
            <person name="Buysshaert C."/>
            <person name="Gielen J."/>
            <person name="Villarroel R."/>
            <person name="De Clercq R."/>
            <person name="van Montagu M."/>
            <person name="Rogers J."/>
            <person name="Cronin A."/>
            <person name="Quail M.A."/>
            <person name="Bray-Allen S."/>
            <person name="Clark L."/>
            <person name="Doggett J."/>
            <person name="Hall S."/>
            <person name="Kay M."/>
            <person name="Lennard N."/>
            <person name="McLay K."/>
            <person name="Mayes R."/>
            <person name="Pettett A."/>
            <person name="Rajandream M.A."/>
            <person name="Lyne M."/>
            <person name="Benes V."/>
            <person name="Rechmann S."/>
            <person name="Borkova D."/>
            <person name="Bloecker H."/>
            <person name="Scharfe M."/>
            <person name="Grimm M."/>
            <person name="Loehnert T.-H."/>
            <person name="Dose S."/>
            <person name="de Haan M."/>
            <person name="Maarse A.C."/>
            <person name="Schaefer M."/>
            <person name="Mueller-Auer S."/>
            <person name="Gabel C."/>
            <person name="Fuchs M."/>
            <person name="Fartmann B."/>
            <person name="Granderath K."/>
            <person name="Dauner D."/>
            <person name="Herzl A."/>
            <person name="Neumann S."/>
            <person name="Argiriou A."/>
            <person name="Vitale D."/>
            <person name="Liguori R."/>
            <person name="Piravandi E."/>
            <person name="Massenet O."/>
            <person name="Quigley F."/>
            <person name="Clabauld G."/>
            <person name="Muendlein A."/>
            <person name="Felber R."/>
            <person name="Schnabl S."/>
            <person name="Hiller R."/>
            <person name="Schmidt W."/>
            <person name="Lecharny A."/>
            <person name="Aubourg S."/>
            <person name="Chefdor F."/>
            <person name="Cooke R."/>
            <person name="Berger C."/>
            <person name="Monfort A."/>
            <person name="Casacuberta E."/>
            <person name="Gibbons T."/>
            <person name="Weber N."/>
            <person name="Vandenbol M."/>
            <person name="Bargues M."/>
            <person name="Terol J."/>
            <person name="Torres A."/>
            <person name="Perez-Perez A."/>
            <person name="Purnelle B."/>
            <person name="Bent E."/>
            <person name="Johnson S."/>
            <person name="Tacon D."/>
            <person name="Jesse T."/>
            <person name="Heijnen L."/>
            <person name="Schwarz S."/>
            <person name="Scholler P."/>
            <person name="Heber S."/>
            <person name="Francs P."/>
            <person name="Bielke C."/>
            <person name="Frishman D."/>
            <person name="Haase D."/>
            <person name="Lemcke K."/>
            <person name="Mewes H.-W."/>
            <person name="Stocker S."/>
            <person name="Zaccaria P."/>
            <person name="Bevan M."/>
            <person name="Wilson R.K."/>
            <person name="de la Bastide M."/>
            <person name="Habermann K."/>
            <person name="Parnell L."/>
            <person name="Dedhia N."/>
            <person name="Gnoj L."/>
            <person name="Schutz K."/>
            <person name="Huang E."/>
            <person name="Spiegel L."/>
            <person name="Sekhon M."/>
            <person name="Murray J."/>
            <person name="Sheet P."/>
            <person name="Cordes M."/>
            <person name="Abu-Threideh J."/>
            <person name="Stoneking T."/>
            <person name="Kalicki J."/>
            <person name="Graves T."/>
            <person name="Harmon G."/>
            <person name="Edwards J."/>
            <person name="Latreille P."/>
            <person name="Courtney L."/>
            <person name="Cloud J."/>
            <person name="Abbott A."/>
            <person name="Scott K."/>
            <person name="Johnson D."/>
            <person name="Minx P."/>
            <person name="Bentley D."/>
            <person name="Fulton B."/>
            <person name="Miller N."/>
            <person name="Greco T."/>
            <person name="Kemp K."/>
            <person name="Kramer J."/>
            <person name="Fulton L."/>
            <person name="Mardis E."/>
            <person name="Dante M."/>
            <person name="Pepin K."/>
            <person name="Hillier L.W."/>
            <person name="Nelson J."/>
            <person name="Spieth J."/>
            <person name="Ryan E."/>
            <person name="Andrews S."/>
            <person name="Geisel C."/>
            <person name="Layman D."/>
            <person name="Du H."/>
            <person name="Ali J."/>
            <person name="Berghoff A."/>
            <person name="Jones K."/>
            <person name="Drone K."/>
            <person name="Cotton M."/>
            <person name="Joshu C."/>
            <person name="Antonoiu B."/>
            <person name="Zidanic M."/>
            <person name="Strong C."/>
            <person name="Sun H."/>
            <person name="Lamar B."/>
            <person name="Yordan C."/>
            <person name="Ma P."/>
            <person name="Zhong J."/>
            <person name="Preston R."/>
            <person name="Vil D."/>
            <person name="Shekher M."/>
            <person name="Matero A."/>
            <person name="Shah R."/>
            <person name="Swaby I.K."/>
            <person name="O'Shaughnessy A."/>
            <person name="Rodriguez M."/>
            <person name="Hoffman J."/>
            <person name="Till S."/>
            <person name="Granat S."/>
            <person name="Shohdy N."/>
            <person name="Hasegawa A."/>
            <person name="Hameed A."/>
            <person name="Lodhi M."/>
            <person name="Johnson A."/>
            <person name="Chen E."/>
            <person name="Marra M.A."/>
            <person name="Martienssen R."/>
            <person name="McCombie W.R."/>
        </authorList>
    </citation>
    <scope>NUCLEOTIDE SEQUENCE [LARGE SCALE GENOMIC DNA]</scope>
    <source>
        <strain>cv. Columbia</strain>
    </source>
</reference>
<reference key="3">
    <citation type="journal article" date="2017" name="Plant J.">
        <title>Araport11: a complete reannotation of the Arabidopsis thaliana reference genome.</title>
        <authorList>
            <person name="Cheng C.Y."/>
            <person name="Krishnakumar V."/>
            <person name="Chan A.P."/>
            <person name="Thibaud-Nissen F."/>
            <person name="Schobel S."/>
            <person name="Town C.D."/>
        </authorList>
    </citation>
    <scope>GENOME REANNOTATION</scope>
    <source>
        <strain>cv. Columbia</strain>
    </source>
</reference>
<reference key="4">
    <citation type="submission" date="2006-02" db="EMBL/GenBank/DDBJ databases">
        <title>Arabidopsis ORF clones.</title>
        <authorList>
            <person name="Shinn P."/>
            <person name="Chen H."/>
            <person name="Kim C.J."/>
            <person name="Ecker J.R."/>
        </authorList>
    </citation>
    <scope>NUCLEOTIDE SEQUENCE [LARGE SCALE MRNA]</scope>
    <source>
        <strain>cv. Columbia</strain>
    </source>
</reference>
<reference key="5">
    <citation type="journal article" date="2002" name="Science">
        <title>Functional annotation of a full-length Arabidopsis cDNA collection.</title>
        <authorList>
            <person name="Seki M."/>
            <person name="Narusaka M."/>
            <person name="Kamiya A."/>
            <person name="Ishida J."/>
            <person name="Satou M."/>
            <person name="Sakurai T."/>
            <person name="Nakajima M."/>
            <person name="Enju A."/>
            <person name="Akiyama K."/>
            <person name="Oono Y."/>
            <person name="Muramatsu M."/>
            <person name="Hayashizaki Y."/>
            <person name="Kawai J."/>
            <person name="Carninci P."/>
            <person name="Itoh M."/>
            <person name="Ishii Y."/>
            <person name="Arakawa T."/>
            <person name="Shibata K."/>
            <person name="Shinagawa A."/>
            <person name="Shinozaki K."/>
        </authorList>
    </citation>
    <scope>NUCLEOTIDE SEQUENCE [LARGE SCALE MRNA] OF 52-229</scope>
    <source>
        <strain>cv. Columbia</strain>
    </source>
</reference>
<reference key="6">
    <citation type="journal article" date="2004" name="Plant Physiol.">
        <title>Immunophilins and parvulins. Superfamily of peptidyl prolyl isomerases in Arabidopsis.</title>
        <authorList>
            <person name="He Z."/>
            <person name="Li L."/>
            <person name="Luan S."/>
        </authorList>
    </citation>
    <scope>GENE FAMILY</scope>
    <scope>NOMENCLATURE</scope>
    <source>
        <strain>cv. Columbia</strain>
    </source>
</reference>
<sequence>MIRCFAWTPLVGAPLITTVHFTSPPSLRIFASRSSAPSSSSSSSSTVAAASRRSISLSIIAVTSSVVSSFCFSSPALADFSEIPNSGGVKALDLRIGDGDVPIEGDQIEIHYYGRLAAKQGWRFDSTYDHKDSNGEAVPFTFVLGSSKVIPGIETAVRSMKVGGIRRVVIPPSQGYQNTSQEPLPPNFFDRQRLFTTIFNPTRLANGEGSTLGTLVFDIELVSTRRLHR</sequence>